<accession>Q751Y8</accession>
<sequence>MSSQWDEDSDADILELANKPPRGTQLTQIESHAETETCGNDESGTGARTHEDLDKLQMDLMTARGESGMLRDRLMMLQQEKDRERERLLGREQELQGRHLQELQKLQEELQRLEDEKQFLVLEKRQLVKGHIAAGLPAQDIQDDSTEVSAKRRKTEDSLVQTYVTLNHTRVVTGDSSLFLDHMVLFKLHGSDMTVLDMLDHISLESPASCSMLVIPSGEPLGKPIHMMLLRLKSMHPLDKMIDIVLENLAMLIKKIMQGKDCRFAVPFLVAYMHQALSFRPSAVHVHALKDLFQFSSDLAIKFQPLLKSPLHASPLELGVEPNIFQYELLDTLSLFYCFDVMELCVKYLLQCSPESQKSFFDEIIWKNITKVMQLSLTISYKSILNVVFSMVEILRALSELITPEELSTVQWWDSAISKLFQLWNRQVSNANLHDNDNLHVLPKHNFPGLNRCLGDSTNVHLIEELIDTKAVQAIPEVIYRDFPPFSRECKIRIEGWGLQLHKATVNILQQLLLRYGKQLAHAELLHQTAKFLCREQELLLVVRLTADSHNSDMRITLAEELIRLLYHAWQEHEEPSKAITEVQNELIACLWRVVFGHMSNRDPQTQPELDALLLDSFHGLSLKEQHDLYDDVFDQPAAQAFLARELAAENVLRCETQFSGCHAYTCREMAKSVLESIISLEDTDSLFLAMVSE</sequence>
<proteinExistence type="inferred from homology"/>
<reference key="1">
    <citation type="journal article" date="2004" name="Science">
        <title>The Ashbya gossypii genome as a tool for mapping the ancient Saccharomyces cerevisiae genome.</title>
        <authorList>
            <person name="Dietrich F.S."/>
            <person name="Voegeli S."/>
            <person name="Brachat S."/>
            <person name="Lerch A."/>
            <person name="Gates K."/>
            <person name="Steiner S."/>
            <person name="Mohr C."/>
            <person name="Poehlmann R."/>
            <person name="Luedi P."/>
            <person name="Choi S."/>
            <person name="Wing R.A."/>
            <person name="Flavier A."/>
            <person name="Gaffney T.D."/>
            <person name="Philippsen P."/>
        </authorList>
    </citation>
    <scope>NUCLEOTIDE SEQUENCE [LARGE SCALE GENOMIC DNA]</scope>
    <source>
        <strain>ATCC 10895 / CBS 109.51 / FGSC 9923 / NRRL Y-1056</strain>
    </source>
</reference>
<reference key="2">
    <citation type="journal article" date="2013" name="G3 (Bethesda)">
        <title>Genomes of Ashbya fungi isolated from insects reveal four mating-type loci, numerous translocations, lack of transposons, and distinct gene duplications.</title>
        <authorList>
            <person name="Dietrich F.S."/>
            <person name="Voegeli S."/>
            <person name="Kuo S."/>
            <person name="Philippsen P."/>
        </authorList>
    </citation>
    <scope>GENOME REANNOTATION</scope>
    <source>
        <strain>ATCC 10895 / CBS 109.51 / FGSC 9923 / NRRL Y-1056</strain>
    </source>
</reference>
<protein>
    <recommendedName>
        <fullName>DNA damage checkpoint protein LCD1</fullName>
    </recommendedName>
</protein>
<evidence type="ECO:0000250" key="1"/>
<evidence type="ECO:0000255" key="2"/>
<evidence type="ECO:0000256" key="3">
    <source>
        <dbReference type="SAM" id="MobiDB-lite"/>
    </source>
</evidence>
<comment type="function">
    <text evidence="1">Forms a complex with the serine/threonine kinase MEC1 which activates checkpoint signaling upon genotoxic stresses. The MEC1-LCD1 complex is recruited to DNA lesions in order to initiates the DNA repair by homologous recombination. Required for cell growth and meiotic recombination (By similarity).</text>
</comment>
<comment type="subunit">
    <text evidence="1">Forms a complex with MEC1.</text>
</comment>
<comment type="subcellular location">
    <subcellularLocation>
        <location evidence="1">Cytoplasm</location>
    </subcellularLocation>
    <subcellularLocation>
        <location evidence="1">Nucleus</location>
    </subcellularLocation>
</comment>
<gene>
    <name type="primary">LCD1</name>
    <name type="ordered locus">AFR687W</name>
</gene>
<feature type="chain" id="PRO_0000227712" description="DNA damage checkpoint protein LCD1">
    <location>
        <begin position="1"/>
        <end position="694"/>
    </location>
</feature>
<feature type="region of interest" description="Disordered" evidence="3">
    <location>
        <begin position="1"/>
        <end position="26"/>
    </location>
</feature>
<feature type="coiled-coil region" evidence="2">
    <location>
        <begin position="68"/>
        <end position="130"/>
    </location>
</feature>
<feature type="compositionally biased region" description="Acidic residues" evidence="3">
    <location>
        <begin position="1"/>
        <end position="13"/>
    </location>
</feature>
<organism>
    <name type="scientific">Eremothecium gossypii (strain ATCC 10895 / CBS 109.51 / FGSC 9923 / NRRL Y-1056)</name>
    <name type="common">Yeast</name>
    <name type="synonym">Ashbya gossypii</name>
    <dbReference type="NCBI Taxonomy" id="284811"/>
    <lineage>
        <taxon>Eukaryota</taxon>
        <taxon>Fungi</taxon>
        <taxon>Dikarya</taxon>
        <taxon>Ascomycota</taxon>
        <taxon>Saccharomycotina</taxon>
        <taxon>Saccharomycetes</taxon>
        <taxon>Saccharomycetales</taxon>
        <taxon>Saccharomycetaceae</taxon>
        <taxon>Eremothecium</taxon>
    </lineage>
</organism>
<keyword id="KW-0156">Chromatin regulator</keyword>
<keyword id="KW-0175">Coiled coil</keyword>
<keyword id="KW-0963">Cytoplasm</keyword>
<keyword id="KW-0227">DNA damage</keyword>
<keyword id="KW-0234">DNA repair</keyword>
<keyword id="KW-0539">Nucleus</keyword>
<keyword id="KW-0597">Phosphoprotein</keyword>
<keyword id="KW-1185">Reference proteome</keyword>
<name>LCD1_EREGS</name>
<dbReference type="EMBL" id="AE016819">
    <property type="protein sequence ID" value="AAS54059.1"/>
    <property type="molecule type" value="Genomic_DNA"/>
</dbReference>
<dbReference type="RefSeq" id="NP_986235.1">
    <property type="nucleotide sequence ID" value="NM_212371.1"/>
</dbReference>
<dbReference type="SMR" id="Q751Y8"/>
<dbReference type="FunCoup" id="Q751Y8">
    <property type="interactions" value="191"/>
</dbReference>
<dbReference type="STRING" id="284811.Q751Y8"/>
<dbReference type="EnsemblFungi" id="AAS54059">
    <property type="protein sequence ID" value="AAS54059"/>
    <property type="gene ID" value="AGOS_AFR687W"/>
</dbReference>
<dbReference type="GeneID" id="4622524"/>
<dbReference type="KEGG" id="ago:AGOS_AFR687W"/>
<dbReference type="eggNOG" id="ENOG502QQI0">
    <property type="taxonomic scope" value="Eukaryota"/>
</dbReference>
<dbReference type="HOGENOM" id="CLU_383646_0_0_1"/>
<dbReference type="InParanoid" id="Q751Y8"/>
<dbReference type="OMA" id="IFQYELI"/>
<dbReference type="OrthoDB" id="4078000at2759"/>
<dbReference type="Proteomes" id="UP000000591">
    <property type="component" value="Chromosome VI"/>
</dbReference>
<dbReference type="GO" id="GO:0070310">
    <property type="term" value="C:ATR-ATRIP complex"/>
    <property type="evidence" value="ECO:0007669"/>
    <property type="project" value="EnsemblFungi"/>
</dbReference>
<dbReference type="GO" id="GO:0005737">
    <property type="term" value="C:cytoplasm"/>
    <property type="evidence" value="ECO:0007669"/>
    <property type="project" value="UniProtKB-SubCell"/>
</dbReference>
<dbReference type="GO" id="GO:0000228">
    <property type="term" value="C:nuclear chromosome"/>
    <property type="evidence" value="ECO:0007669"/>
    <property type="project" value="EnsemblFungi"/>
</dbReference>
<dbReference type="GO" id="GO:0003684">
    <property type="term" value="F:damaged DNA binding"/>
    <property type="evidence" value="ECO:0007669"/>
    <property type="project" value="EnsemblFungi"/>
</dbReference>
<dbReference type="GO" id="GO:0006325">
    <property type="term" value="P:chromatin organization"/>
    <property type="evidence" value="ECO:0007669"/>
    <property type="project" value="UniProtKB-KW"/>
</dbReference>
<dbReference type="GO" id="GO:0000077">
    <property type="term" value="P:DNA damage checkpoint signaling"/>
    <property type="evidence" value="ECO:0007669"/>
    <property type="project" value="EnsemblFungi"/>
</dbReference>
<dbReference type="GO" id="GO:0006281">
    <property type="term" value="P:DNA repair"/>
    <property type="evidence" value="ECO:0007669"/>
    <property type="project" value="UniProtKB-KW"/>
</dbReference>
<dbReference type="GO" id="GO:0045184">
    <property type="term" value="P:establishment of protein localization"/>
    <property type="evidence" value="ECO:0007669"/>
    <property type="project" value="EnsemblFungi"/>
</dbReference>
<dbReference type="GO" id="GO:0007004">
    <property type="term" value="P:telomere maintenance via telomerase"/>
    <property type="evidence" value="ECO:0007669"/>
    <property type="project" value="EnsemblFungi"/>
</dbReference>
<dbReference type="InterPro" id="IPR018622">
    <property type="entry name" value="DNA_damage_chkpnt_Lcd1"/>
</dbReference>
<dbReference type="Pfam" id="PF09798">
    <property type="entry name" value="LCD1"/>
    <property type="match status" value="1"/>
</dbReference>